<evidence type="ECO:0000255" key="1">
    <source>
        <dbReference type="HAMAP-Rule" id="MF_00259"/>
    </source>
</evidence>
<comment type="function">
    <text evidence="1">The glycine cleavage system catalyzes the degradation of glycine.</text>
</comment>
<comment type="catalytic activity">
    <reaction evidence="1">
        <text>N(6)-[(R)-S(8)-aminomethyldihydrolipoyl]-L-lysyl-[protein] + (6S)-5,6,7,8-tetrahydrofolate = N(6)-[(R)-dihydrolipoyl]-L-lysyl-[protein] + (6R)-5,10-methylene-5,6,7,8-tetrahydrofolate + NH4(+)</text>
        <dbReference type="Rhea" id="RHEA:16945"/>
        <dbReference type="Rhea" id="RHEA-COMP:10475"/>
        <dbReference type="Rhea" id="RHEA-COMP:10492"/>
        <dbReference type="ChEBI" id="CHEBI:15636"/>
        <dbReference type="ChEBI" id="CHEBI:28938"/>
        <dbReference type="ChEBI" id="CHEBI:57453"/>
        <dbReference type="ChEBI" id="CHEBI:83100"/>
        <dbReference type="ChEBI" id="CHEBI:83143"/>
        <dbReference type="EC" id="2.1.2.10"/>
    </reaction>
</comment>
<comment type="subunit">
    <text evidence="1">The glycine cleavage system is composed of four proteins: P, T, L and H.</text>
</comment>
<comment type="similarity">
    <text evidence="1">Belongs to the GcvT family.</text>
</comment>
<accession>B8GNE2</accession>
<reference key="1">
    <citation type="journal article" date="2011" name="Stand. Genomic Sci.">
        <title>Complete genome sequence of 'Thioalkalivibrio sulfidophilus' HL-EbGr7.</title>
        <authorList>
            <person name="Muyzer G."/>
            <person name="Sorokin D.Y."/>
            <person name="Mavromatis K."/>
            <person name="Lapidus A."/>
            <person name="Clum A."/>
            <person name="Ivanova N."/>
            <person name="Pati A."/>
            <person name="d'Haeseleer P."/>
            <person name="Woyke T."/>
            <person name="Kyrpides N.C."/>
        </authorList>
    </citation>
    <scope>NUCLEOTIDE SEQUENCE [LARGE SCALE GENOMIC DNA]</scope>
    <source>
        <strain>HL-EbGR7</strain>
    </source>
</reference>
<organism>
    <name type="scientific">Thioalkalivibrio sulfidiphilus (strain HL-EbGR7)</name>
    <dbReference type="NCBI Taxonomy" id="396588"/>
    <lineage>
        <taxon>Bacteria</taxon>
        <taxon>Pseudomonadati</taxon>
        <taxon>Pseudomonadota</taxon>
        <taxon>Gammaproteobacteria</taxon>
        <taxon>Chromatiales</taxon>
        <taxon>Ectothiorhodospiraceae</taxon>
        <taxon>Thioalkalivibrio</taxon>
    </lineage>
</organism>
<feature type="chain" id="PRO_1000125649" description="Aminomethyltransferase">
    <location>
        <begin position="1"/>
        <end position="363"/>
    </location>
</feature>
<protein>
    <recommendedName>
        <fullName evidence="1">Aminomethyltransferase</fullName>
        <ecNumber evidence="1">2.1.2.10</ecNumber>
    </recommendedName>
    <alternativeName>
        <fullName evidence="1">Glycine cleavage system T protein</fullName>
    </alternativeName>
</protein>
<proteinExistence type="inferred from homology"/>
<sequence length="363" mass="39232">MSKQTPLYEKHLEAGARMVDFGGWSMPLHYGSQIEEHHAVRRDAGMFDVSHMTVVDVQGNGARDYLRFLLANDVAKLKVPGKALYSCMLTPEGGVVDDLITYYLSDTFYRLVVNAATRDKDLAWMRDRATGFDVLLQERDDLAMVAVQGPHGRDKALSVLDGEIARVADALSPFVGGQAGDWFVGRTGYTGEDGFEIMLPAAEAPAFWDRLKVAGVQPAGLGARDTLRLEAGMNLYGQDMDEQVSPLESGLAWTVAFEPAERDFVGRAALEKQKAAGGLRRFVGLVLEGRGVLRGHMRVLCGAAGEGEITSGGFSPTLGVSIALARVPAGTGERVEVDVRGKPQPARLVKPPFVRNGQACVEI</sequence>
<dbReference type="EC" id="2.1.2.10" evidence="1"/>
<dbReference type="EMBL" id="CP001339">
    <property type="protein sequence ID" value="ACL73833.1"/>
    <property type="molecule type" value="Genomic_DNA"/>
</dbReference>
<dbReference type="RefSeq" id="WP_012639308.1">
    <property type="nucleotide sequence ID" value="NC_011901.1"/>
</dbReference>
<dbReference type="SMR" id="B8GNE2"/>
<dbReference type="STRING" id="396588.Tgr7_2759"/>
<dbReference type="KEGG" id="tgr:Tgr7_2759"/>
<dbReference type="eggNOG" id="COG0404">
    <property type="taxonomic scope" value="Bacteria"/>
</dbReference>
<dbReference type="HOGENOM" id="CLU_007884_10_2_6"/>
<dbReference type="OrthoDB" id="9774591at2"/>
<dbReference type="Proteomes" id="UP000002383">
    <property type="component" value="Chromosome"/>
</dbReference>
<dbReference type="GO" id="GO:0005829">
    <property type="term" value="C:cytosol"/>
    <property type="evidence" value="ECO:0007669"/>
    <property type="project" value="TreeGrafter"/>
</dbReference>
<dbReference type="GO" id="GO:0005960">
    <property type="term" value="C:glycine cleavage complex"/>
    <property type="evidence" value="ECO:0007669"/>
    <property type="project" value="InterPro"/>
</dbReference>
<dbReference type="GO" id="GO:0004047">
    <property type="term" value="F:aminomethyltransferase activity"/>
    <property type="evidence" value="ECO:0007669"/>
    <property type="project" value="UniProtKB-UniRule"/>
</dbReference>
<dbReference type="GO" id="GO:0008483">
    <property type="term" value="F:transaminase activity"/>
    <property type="evidence" value="ECO:0007669"/>
    <property type="project" value="UniProtKB-KW"/>
</dbReference>
<dbReference type="GO" id="GO:0019464">
    <property type="term" value="P:glycine decarboxylation via glycine cleavage system"/>
    <property type="evidence" value="ECO:0007669"/>
    <property type="project" value="UniProtKB-UniRule"/>
</dbReference>
<dbReference type="FunFam" id="3.30.70.1400:FF:000001">
    <property type="entry name" value="Aminomethyltransferase"/>
    <property type="match status" value="1"/>
</dbReference>
<dbReference type="FunFam" id="4.10.1250.10:FF:000001">
    <property type="entry name" value="Aminomethyltransferase"/>
    <property type="match status" value="1"/>
</dbReference>
<dbReference type="Gene3D" id="2.40.30.110">
    <property type="entry name" value="Aminomethyltransferase beta-barrel domains"/>
    <property type="match status" value="1"/>
</dbReference>
<dbReference type="Gene3D" id="3.30.70.1400">
    <property type="entry name" value="Aminomethyltransferase beta-barrel domains"/>
    <property type="match status" value="1"/>
</dbReference>
<dbReference type="Gene3D" id="4.10.1250.10">
    <property type="entry name" value="Aminomethyltransferase fragment"/>
    <property type="match status" value="1"/>
</dbReference>
<dbReference type="Gene3D" id="3.30.1360.120">
    <property type="entry name" value="Probable tRNA modification gtpase trme, domain 1"/>
    <property type="match status" value="1"/>
</dbReference>
<dbReference type="HAMAP" id="MF_00259">
    <property type="entry name" value="GcvT"/>
    <property type="match status" value="1"/>
</dbReference>
<dbReference type="InterPro" id="IPR006223">
    <property type="entry name" value="GCS_T"/>
</dbReference>
<dbReference type="InterPro" id="IPR022903">
    <property type="entry name" value="GCS_T_bac"/>
</dbReference>
<dbReference type="InterPro" id="IPR013977">
    <property type="entry name" value="GCST_C"/>
</dbReference>
<dbReference type="InterPro" id="IPR006222">
    <property type="entry name" value="GCV_T_N"/>
</dbReference>
<dbReference type="InterPro" id="IPR028896">
    <property type="entry name" value="GcvT/YgfZ/DmdA"/>
</dbReference>
<dbReference type="InterPro" id="IPR029043">
    <property type="entry name" value="GcvT/YgfZ_C"/>
</dbReference>
<dbReference type="InterPro" id="IPR027266">
    <property type="entry name" value="TrmE/GcvT_dom1"/>
</dbReference>
<dbReference type="NCBIfam" id="TIGR00528">
    <property type="entry name" value="gcvT"/>
    <property type="match status" value="1"/>
</dbReference>
<dbReference type="NCBIfam" id="NF001567">
    <property type="entry name" value="PRK00389.1"/>
    <property type="match status" value="1"/>
</dbReference>
<dbReference type="PANTHER" id="PTHR43757">
    <property type="entry name" value="AMINOMETHYLTRANSFERASE"/>
    <property type="match status" value="1"/>
</dbReference>
<dbReference type="PANTHER" id="PTHR43757:SF2">
    <property type="entry name" value="AMINOMETHYLTRANSFERASE, MITOCHONDRIAL"/>
    <property type="match status" value="1"/>
</dbReference>
<dbReference type="Pfam" id="PF01571">
    <property type="entry name" value="GCV_T"/>
    <property type="match status" value="1"/>
</dbReference>
<dbReference type="Pfam" id="PF08669">
    <property type="entry name" value="GCV_T_C"/>
    <property type="match status" value="1"/>
</dbReference>
<dbReference type="PIRSF" id="PIRSF006487">
    <property type="entry name" value="GcvT"/>
    <property type="match status" value="1"/>
</dbReference>
<dbReference type="SUPFAM" id="SSF101790">
    <property type="entry name" value="Aminomethyltransferase beta-barrel domain"/>
    <property type="match status" value="1"/>
</dbReference>
<dbReference type="SUPFAM" id="SSF103025">
    <property type="entry name" value="Folate-binding domain"/>
    <property type="match status" value="1"/>
</dbReference>
<keyword id="KW-0032">Aminotransferase</keyword>
<keyword id="KW-1185">Reference proteome</keyword>
<keyword id="KW-0808">Transferase</keyword>
<gene>
    <name evidence="1" type="primary">gcvT</name>
    <name type="ordered locus">Tgr7_2759</name>
</gene>
<name>GCST_THISH</name>